<reference key="1">
    <citation type="journal article" date="2005" name="Genome Biol.">
        <title>Full-length cDNAs from chicken bursal lymphocytes to facilitate gene function analysis.</title>
        <authorList>
            <person name="Caldwell R.B."/>
            <person name="Kierzek A.M."/>
            <person name="Arakawa H."/>
            <person name="Bezzubov Y."/>
            <person name="Zaim J."/>
            <person name="Fiedler P."/>
            <person name="Kutter S."/>
            <person name="Blagodatski A."/>
            <person name="Kostovska D."/>
            <person name="Koter M."/>
            <person name="Plachy J."/>
            <person name="Carninci P."/>
            <person name="Hayashizaki Y."/>
            <person name="Buerstedde J.-M."/>
        </authorList>
    </citation>
    <scope>NUCLEOTIDE SEQUENCE [LARGE SCALE MRNA]</scope>
    <source>
        <strain>CB</strain>
        <tissue>Bursa of Fabricius</tissue>
    </source>
</reference>
<name>MCTS1_CHICK</name>
<accession>Q5ZI42</accession>
<feature type="chain" id="PRO_0000344790" description="Malignant T-cell-amplified sequence 1">
    <location>
        <begin position="1"/>
        <end position="181"/>
    </location>
</feature>
<feature type="domain" description="PUA" evidence="2">
    <location>
        <begin position="92"/>
        <end position="171"/>
    </location>
</feature>
<gene>
    <name type="primary">MCTS1</name>
    <name type="ORF">RCJMB04_30h12</name>
</gene>
<sequence length="181" mass="20571">MFKKFDEKENVSNCIQLKTSVIKGIKNQLIDQFPVIEPWLNQIMPKKDPVKIVRCHEHIEILTVNGELLFFRQREGIFYPTLRLLHKYPFILPHQQVDKGAIKFVLSGANIMCPGLTSPGAKLYPAAVDTVVAIMAEGKQHALCVGVMKMSADDIEKVNKGIGIENIHYLNDGLWHMKTYK</sequence>
<protein>
    <recommendedName>
        <fullName>Malignant T-cell-amplified sequence 1</fullName>
        <shortName>MCT-1</shortName>
    </recommendedName>
</protein>
<comment type="function">
    <text evidence="1">Plays a role as translation enhancer and involved in cell cycle regulation.</text>
</comment>
<comment type="subcellular location">
    <subcellularLocation>
        <location evidence="1">Cytoplasm</location>
    </subcellularLocation>
</comment>
<comment type="domain">
    <text evidence="1">The PUA RNA-binding domain is critical for cap binding, but not sufficient for translation enhancer function.</text>
</comment>
<comment type="similarity">
    <text evidence="3">Belongs to the MCTS1 family.</text>
</comment>
<keyword id="KW-0131">Cell cycle</keyword>
<keyword id="KW-0963">Cytoplasm</keyword>
<keyword id="KW-0341">Growth regulation</keyword>
<keyword id="KW-1185">Reference proteome</keyword>
<keyword id="KW-0804">Transcription</keyword>
<keyword id="KW-0805">Transcription regulation</keyword>
<organism>
    <name type="scientific">Gallus gallus</name>
    <name type="common">Chicken</name>
    <dbReference type="NCBI Taxonomy" id="9031"/>
    <lineage>
        <taxon>Eukaryota</taxon>
        <taxon>Metazoa</taxon>
        <taxon>Chordata</taxon>
        <taxon>Craniata</taxon>
        <taxon>Vertebrata</taxon>
        <taxon>Euteleostomi</taxon>
        <taxon>Archelosauria</taxon>
        <taxon>Archosauria</taxon>
        <taxon>Dinosauria</taxon>
        <taxon>Saurischia</taxon>
        <taxon>Theropoda</taxon>
        <taxon>Coelurosauria</taxon>
        <taxon>Aves</taxon>
        <taxon>Neognathae</taxon>
        <taxon>Galloanserae</taxon>
        <taxon>Galliformes</taxon>
        <taxon>Phasianidae</taxon>
        <taxon>Phasianinae</taxon>
        <taxon>Gallus</taxon>
    </lineage>
</organism>
<proteinExistence type="evidence at transcript level"/>
<dbReference type="EMBL" id="AJ720942">
    <property type="protein sequence ID" value="CAG32601.1"/>
    <property type="molecule type" value="mRNA"/>
</dbReference>
<dbReference type="RefSeq" id="NP_001099145.1">
    <property type="nucleotide sequence ID" value="NM_001105675.2"/>
</dbReference>
<dbReference type="SMR" id="Q5ZI42"/>
<dbReference type="FunCoup" id="Q5ZI42">
    <property type="interactions" value="1561"/>
</dbReference>
<dbReference type="STRING" id="9031.ENSGALP00000013855"/>
<dbReference type="PaxDb" id="9031-ENSGALP00000013855"/>
<dbReference type="Ensembl" id="ENSGALT00010029418.1">
    <property type="protein sequence ID" value="ENSGALP00010017088.1"/>
    <property type="gene ID" value="ENSGALG00010012288.1"/>
</dbReference>
<dbReference type="GeneID" id="422363"/>
<dbReference type="KEGG" id="gga:422363"/>
<dbReference type="CTD" id="28985"/>
<dbReference type="VEuPathDB" id="HostDB:geneid_422363"/>
<dbReference type="eggNOG" id="KOG2523">
    <property type="taxonomic scope" value="Eukaryota"/>
</dbReference>
<dbReference type="GeneTree" id="ENSGT00550000074964"/>
<dbReference type="HOGENOM" id="CLU_090468_0_1_1"/>
<dbReference type="InParanoid" id="Q5ZI42"/>
<dbReference type="OMA" id="GVENIHY"/>
<dbReference type="OrthoDB" id="10249667at2759"/>
<dbReference type="PhylomeDB" id="Q5ZI42"/>
<dbReference type="TreeFam" id="TF315123"/>
<dbReference type="PRO" id="PR:Q5ZI42"/>
<dbReference type="Proteomes" id="UP000000539">
    <property type="component" value="Chromosome 4"/>
</dbReference>
<dbReference type="Bgee" id="ENSGALG00000008517">
    <property type="expression patterns" value="Expressed in skeletal muscle tissue and 13 other cell types or tissues"/>
</dbReference>
<dbReference type="GO" id="GO:0005737">
    <property type="term" value="C:cytoplasm"/>
    <property type="evidence" value="ECO:0007669"/>
    <property type="project" value="UniProtKB-SubCell"/>
</dbReference>
<dbReference type="GO" id="GO:0003723">
    <property type="term" value="F:RNA binding"/>
    <property type="evidence" value="ECO:0007669"/>
    <property type="project" value="InterPro"/>
</dbReference>
<dbReference type="GO" id="GO:0001731">
    <property type="term" value="P:formation of translation preinitiation complex"/>
    <property type="evidence" value="ECO:0000318"/>
    <property type="project" value="GO_Central"/>
</dbReference>
<dbReference type="CDD" id="cd11609">
    <property type="entry name" value="MCT1_N"/>
    <property type="match status" value="1"/>
</dbReference>
<dbReference type="CDD" id="cd21155">
    <property type="entry name" value="PUA_MCTS-1-like"/>
    <property type="match status" value="1"/>
</dbReference>
<dbReference type="FunFam" id="3.10.400.20:FF:000001">
    <property type="entry name" value="Malignant T-cell-amplified sequence 1"/>
    <property type="match status" value="1"/>
</dbReference>
<dbReference type="Gene3D" id="3.10.400.20">
    <property type="match status" value="1"/>
</dbReference>
<dbReference type="InterPro" id="IPR016437">
    <property type="entry name" value="MCT-1/Tma20"/>
</dbReference>
<dbReference type="InterPro" id="IPR041366">
    <property type="entry name" value="Pre-PUA"/>
</dbReference>
<dbReference type="InterPro" id="IPR002478">
    <property type="entry name" value="PUA"/>
</dbReference>
<dbReference type="InterPro" id="IPR015947">
    <property type="entry name" value="PUA-like_sf"/>
</dbReference>
<dbReference type="InterPro" id="IPR004521">
    <property type="entry name" value="Uncharacterised_CHP00451"/>
</dbReference>
<dbReference type="NCBIfam" id="TIGR00451">
    <property type="entry name" value="unchar_dom_2"/>
    <property type="match status" value="1"/>
</dbReference>
<dbReference type="PANTHER" id="PTHR22798:SF0">
    <property type="entry name" value="MALIGNANT T-CELL-AMPLIFIED SEQUENCE 1"/>
    <property type="match status" value="1"/>
</dbReference>
<dbReference type="PANTHER" id="PTHR22798">
    <property type="entry name" value="MCT-1 PROTEIN"/>
    <property type="match status" value="1"/>
</dbReference>
<dbReference type="Pfam" id="PF17832">
    <property type="entry name" value="Pre-PUA"/>
    <property type="match status" value="1"/>
</dbReference>
<dbReference type="Pfam" id="PF01472">
    <property type="entry name" value="PUA"/>
    <property type="match status" value="1"/>
</dbReference>
<dbReference type="PIRSF" id="PIRSF005067">
    <property type="entry name" value="Tma_RNA-bind_prd"/>
    <property type="match status" value="1"/>
</dbReference>
<dbReference type="SMART" id="SM00359">
    <property type="entry name" value="PUA"/>
    <property type="match status" value="1"/>
</dbReference>
<dbReference type="SUPFAM" id="SSF88697">
    <property type="entry name" value="PUA domain-like"/>
    <property type="match status" value="1"/>
</dbReference>
<dbReference type="PROSITE" id="PS50890">
    <property type="entry name" value="PUA"/>
    <property type="match status" value="1"/>
</dbReference>
<evidence type="ECO:0000250" key="1"/>
<evidence type="ECO:0000255" key="2">
    <source>
        <dbReference type="PROSITE-ProRule" id="PRU00161"/>
    </source>
</evidence>
<evidence type="ECO:0000305" key="3"/>